<comment type="function">
    <text evidence="1">Catalyzes the interconversion of methylthioribose-1-phosphate (MTR-1-P) into methylthioribulose-1-phosphate (MTRu-1-P).</text>
</comment>
<comment type="catalytic activity">
    <reaction evidence="1">
        <text>5-(methylsulfanyl)-alpha-D-ribose 1-phosphate = 5-(methylsulfanyl)-D-ribulose 1-phosphate</text>
        <dbReference type="Rhea" id="RHEA:19989"/>
        <dbReference type="ChEBI" id="CHEBI:58533"/>
        <dbReference type="ChEBI" id="CHEBI:58548"/>
        <dbReference type="EC" id="5.3.1.23"/>
    </reaction>
</comment>
<comment type="pathway">
    <text evidence="1">Amino-acid biosynthesis; L-methionine biosynthesis via salvage pathway; L-methionine from S-methyl-5-thio-alpha-D-ribose 1-phosphate: step 1/6.</text>
</comment>
<comment type="subcellular location">
    <subcellularLocation>
        <location evidence="1">Cytoplasm</location>
    </subcellularLocation>
    <subcellularLocation>
        <location evidence="1">Nucleus</location>
    </subcellularLocation>
</comment>
<comment type="similarity">
    <text evidence="1">Belongs to the eIF-2B alpha/beta/delta subunits family. MtnA subfamily.</text>
</comment>
<name>MTNA_VERA1</name>
<protein>
    <recommendedName>
        <fullName evidence="1">Methylthioribose-1-phosphate isomerase</fullName>
        <shortName evidence="1">M1Pi</shortName>
        <shortName evidence="1">MTR-1-P isomerase</shortName>
        <ecNumber evidence="1">5.3.1.23</ecNumber>
    </recommendedName>
    <alternativeName>
        <fullName evidence="1">S-methyl-5-thioribose-1-phosphate isomerase</fullName>
    </alternativeName>
    <alternativeName>
        <fullName evidence="1">Translation initiation factor eIF-2B subunit alpha/beta/delta-like protein</fullName>
    </alternativeName>
</protein>
<proteinExistence type="inferred from homology"/>
<dbReference type="EC" id="5.3.1.23" evidence="1"/>
<dbReference type="EMBL" id="DS985215">
    <property type="protein sequence ID" value="EEY16362.1"/>
    <property type="molecule type" value="Genomic_DNA"/>
</dbReference>
<dbReference type="RefSeq" id="XP_003008283.1">
    <property type="nucleotide sequence ID" value="XM_003008237.1"/>
</dbReference>
<dbReference type="SMR" id="C9SB02"/>
<dbReference type="STRING" id="526221.C9SB02"/>
<dbReference type="GeneID" id="9533977"/>
<dbReference type="KEGG" id="val:VDBG_02471"/>
<dbReference type="eggNOG" id="KOG1468">
    <property type="taxonomic scope" value="Eukaryota"/>
</dbReference>
<dbReference type="HOGENOM" id="CLU_016218_1_3_1"/>
<dbReference type="OMA" id="CETRPLN"/>
<dbReference type="OrthoDB" id="2461at2759"/>
<dbReference type="UniPathway" id="UPA00904">
    <property type="reaction ID" value="UER00874"/>
</dbReference>
<dbReference type="Proteomes" id="UP000008698">
    <property type="component" value="Unassembled WGS sequence"/>
</dbReference>
<dbReference type="GO" id="GO:0005737">
    <property type="term" value="C:cytoplasm"/>
    <property type="evidence" value="ECO:0007669"/>
    <property type="project" value="UniProtKB-SubCell"/>
</dbReference>
<dbReference type="GO" id="GO:0005634">
    <property type="term" value="C:nucleus"/>
    <property type="evidence" value="ECO:0007669"/>
    <property type="project" value="UniProtKB-SubCell"/>
</dbReference>
<dbReference type="GO" id="GO:0046523">
    <property type="term" value="F:S-methyl-5-thioribose-1-phosphate isomerase activity"/>
    <property type="evidence" value="ECO:0007669"/>
    <property type="project" value="UniProtKB-UniRule"/>
</dbReference>
<dbReference type="GO" id="GO:0019509">
    <property type="term" value="P:L-methionine salvage from methylthioadenosine"/>
    <property type="evidence" value="ECO:0007669"/>
    <property type="project" value="UniProtKB-UniRule"/>
</dbReference>
<dbReference type="FunFam" id="1.20.120.420:FF:000003">
    <property type="entry name" value="Methylthioribose-1-phosphate isomerase"/>
    <property type="match status" value="1"/>
</dbReference>
<dbReference type="FunFam" id="3.40.50.10470:FF:000003">
    <property type="entry name" value="Methylthioribose-1-phosphate isomerase"/>
    <property type="match status" value="1"/>
</dbReference>
<dbReference type="Gene3D" id="1.20.120.420">
    <property type="entry name" value="translation initiation factor eif-2b, domain 1"/>
    <property type="match status" value="1"/>
</dbReference>
<dbReference type="Gene3D" id="3.40.50.10470">
    <property type="entry name" value="Translation initiation factor eif-2b, domain 2"/>
    <property type="match status" value="1"/>
</dbReference>
<dbReference type="HAMAP" id="MF_01678">
    <property type="entry name" value="Salvage_MtnA"/>
    <property type="match status" value="1"/>
</dbReference>
<dbReference type="InterPro" id="IPR000649">
    <property type="entry name" value="IF-2B-related"/>
</dbReference>
<dbReference type="InterPro" id="IPR005251">
    <property type="entry name" value="IF-M1Pi"/>
</dbReference>
<dbReference type="InterPro" id="IPR042529">
    <property type="entry name" value="IF_2B-like_C"/>
</dbReference>
<dbReference type="InterPro" id="IPR011559">
    <property type="entry name" value="Initiation_fac_2B_a/b/d"/>
</dbReference>
<dbReference type="InterPro" id="IPR027363">
    <property type="entry name" value="M1Pi_N"/>
</dbReference>
<dbReference type="InterPro" id="IPR037171">
    <property type="entry name" value="NagB/RpiA_transferase-like"/>
</dbReference>
<dbReference type="NCBIfam" id="TIGR00524">
    <property type="entry name" value="eIF-2B_rel"/>
    <property type="match status" value="1"/>
</dbReference>
<dbReference type="NCBIfam" id="NF004326">
    <property type="entry name" value="PRK05720.1"/>
    <property type="match status" value="1"/>
</dbReference>
<dbReference type="NCBIfam" id="TIGR00512">
    <property type="entry name" value="salvage_mtnA"/>
    <property type="match status" value="1"/>
</dbReference>
<dbReference type="PANTHER" id="PTHR43475">
    <property type="entry name" value="METHYLTHIORIBOSE-1-PHOSPHATE ISOMERASE"/>
    <property type="match status" value="1"/>
</dbReference>
<dbReference type="PANTHER" id="PTHR43475:SF1">
    <property type="entry name" value="METHYLTHIORIBOSE-1-PHOSPHATE ISOMERASE"/>
    <property type="match status" value="1"/>
</dbReference>
<dbReference type="Pfam" id="PF01008">
    <property type="entry name" value="IF-2B"/>
    <property type="match status" value="1"/>
</dbReference>
<dbReference type="SUPFAM" id="SSF100950">
    <property type="entry name" value="NagB/RpiA/CoA transferase-like"/>
    <property type="match status" value="1"/>
</dbReference>
<reference key="1">
    <citation type="journal article" date="2011" name="PLoS Pathog.">
        <title>Comparative genomics yields insights into niche adaptation of plant vascular wilt pathogens.</title>
        <authorList>
            <person name="Klosterman S.J."/>
            <person name="Subbarao K.V."/>
            <person name="Kang S."/>
            <person name="Veronese P."/>
            <person name="Gold S.E."/>
            <person name="Thomma B.P.H.J."/>
            <person name="Chen Z."/>
            <person name="Henrissat B."/>
            <person name="Lee Y.-H."/>
            <person name="Park J."/>
            <person name="Garcia-Pedrajas M.D."/>
            <person name="Barbara D.J."/>
            <person name="Anchieta A."/>
            <person name="de Jonge R."/>
            <person name="Santhanam P."/>
            <person name="Maruthachalam K."/>
            <person name="Atallah Z."/>
            <person name="Amyotte S.G."/>
            <person name="Paz Z."/>
            <person name="Inderbitzin P."/>
            <person name="Hayes R.J."/>
            <person name="Heiman D.I."/>
            <person name="Young S."/>
            <person name="Zeng Q."/>
            <person name="Engels R."/>
            <person name="Galagan J."/>
            <person name="Cuomo C.A."/>
            <person name="Dobinson K.F."/>
            <person name="Ma L.-J."/>
        </authorList>
    </citation>
    <scope>NUCLEOTIDE SEQUENCE [LARGE SCALE GENOMIC DNA]</scope>
    <source>
        <strain>VaMs.102 / ATCC MYA-4576 / FGSC 10136</strain>
    </source>
</reference>
<accession>C9SB02</accession>
<sequence length="388" mass="42268">MSTLQAVKYSRGNLEVLDQLRLPHEFHYDNVSTSEEAFDCIRSMRVRGAPAIAIVASLAHAVELHNGSCRATSSEEVISYIHGRLDYLKESRPTAVDLTNAINQLKARTQELAGQDRDAIIKAYIEEAENILEKDLKTNLSIGDHGADWLKDVAQAGPDGKISVLTHCNTGSLATSGHGTALGIIRTLQSRGWLNHAYCTETRPYNQGSRLTAFELVFEKIPSTLITDSMAAALFALQKETMNISAVIVGADRVVRNGDTANKIGTYQLAVLAKHHGIKFIVAAPTTSIDLETMTGEGIHIEERKREELTQISGATVGSDGSVDVAKTVRVATADQRIDVWNPAFDVTPHDLIDAVVTEKGAVVKGTNGEFDFSHVMPERWARLVGQQ</sequence>
<feature type="chain" id="PRO_0000402058" description="Methylthioribose-1-phosphate isomerase">
    <location>
        <begin position="1"/>
        <end position="388"/>
    </location>
</feature>
<feature type="active site" description="Proton donor" evidence="1">
    <location>
        <position position="252"/>
    </location>
</feature>
<feature type="site" description="Transition state stabilizer" evidence="1">
    <location>
        <position position="168"/>
    </location>
</feature>
<evidence type="ECO:0000255" key="1">
    <source>
        <dbReference type="HAMAP-Rule" id="MF_03119"/>
    </source>
</evidence>
<keyword id="KW-0028">Amino-acid biosynthesis</keyword>
<keyword id="KW-0963">Cytoplasm</keyword>
<keyword id="KW-0413">Isomerase</keyword>
<keyword id="KW-0486">Methionine biosynthesis</keyword>
<keyword id="KW-0539">Nucleus</keyword>
<keyword id="KW-1185">Reference proteome</keyword>
<organism>
    <name type="scientific">Verticillium alfalfae (strain VaMs.102 / ATCC MYA-4576 / FGSC 10136)</name>
    <name type="common">Verticillium wilt of alfalfa</name>
    <name type="synonym">Verticillium albo-atrum</name>
    <dbReference type="NCBI Taxonomy" id="526221"/>
    <lineage>
        <taxon>Eukaryota</taxon>
        <taxon>Fungi</taxon>
        <taxon>Dikarya</taxon>
        <taxon>Ascomycota</taxon>
        <taxon>Pezizomycotina</taxon>
        <taxon>Sordariomycetes</taxon>
        <taxon>Hypocreomycetidae</taxon>
        <taxon>Glomerellales</taxon>
        <taxon>Plectosphaerellaceae</taxon>
        <taxon>Verticillium</taxon>
    </lineage>
</organism>
<gene>
    <name evidence="1" type="primary">MRI1</name>
    <name type="ORF">VDBG_02471</name>
</gene>